<name>FXL20_HUMAN</name>
<reference key="1">
    <citation type="submission" date="2005-09" db="EMBL/GenBank/DDBJ databases">
        <title>Identification of a novel FBXL20 splice variant.</title>
        <authorList>
            <person name="Stavropoulou A.V."/>
            <person name="Alao J.P."/>
            <person name="Lam E.W.F."/>
            <person name="Coombes R.C."/>
            <person name="Vigushin D.M."/>
        </authorList>
    </citation>
    <scope>NUCLEOTIDE SEQUENCE [MRNA] (ISOFORM 2)</scope>
</reference>
<reference key="2">
    <citation type="journal article" date="2004" name="Nat. Genet.">
        <title>Complete sequencing and characterization of 21,243 full-length human cDNAs.</title>
        <authorList>
            <person name="Ota T."/>
            <person name="Suzuki Y."/>
            <person name="Nishikawa T."/>
            <person name="Otsuki T."/>
            <person name="Sugiyama T."/>
            <person name="Irie R."/>
            <person name="Wakamatsu A."/>
            <person name="Hayashi K."/>
            <person name="Sato H."/>
            <person name="Nagai K."/>
            <person name="Kimura K."/>
            <person name="Makita H."/>
            <person name="Sekine M."/>
            <person name="Obayashi M."/>
            <person name="Nishi T."/>
            <person name="Shibahara T."/>
            <person name="Tanaka T."/>
            <person name="Ishii S."/>
            <person name="Yamamoto J."/>
            <person name="Saito K."/>
            <person name="Kawai Y."/>
            <person name="Isono Y."/>
            <person name="Nakamura Y."/>
            <person name="Nagahari K."/>
            <person name="Murakami K."/>
            <person name="Yasuda T."/>
            <person name="Iwayanagi T."/>
            <person name="Wagatsuma M."/>
            <person name="Shiratori A."/>
            <person name="Sudo H."/>
            <person name="Hosoiri T."/>
            <person name="Kaku Y."/>
            <person name="Kodaira H."/>
            <person name="Kondo H."/>
            <person name="Sugawara M."/>
            <person name="Takahashi M."/>
            <person name="Kanda K."/>
            <person name="Yokoi T."/>
            <person name="Furuya T."/>
            <person name="Kikkawa E."/>
            <person name="Omura Y."/>
            <person name="Abe K."/>
            <person name="Kamihara K."/>
            <person name="Katsuta N."/>
            <person name="Sato K."/>
            <person name="Tanikawa M."/>
            <person name="Yamazaki M."/>
            <person name="Ninomiya K."/>
            <person name="Ishibashi T."/>
            <person name="Yamashita H."/>
            <person name="Murakawa K."/>
            <person name="Fujimori K."/>
            <person name="Tanai H."/>
            <person name="Kimata M."/>
            <person name="Watanabe M."/>
            <person name="Hiraoka S."/>
            <person name="Chiba Y."/>
            <person name="Ishida S."/>
            <person name="Ono Y."/>
            <person name="Takiguchi S."/>
            <person name="Watanabe S."/>
            <person name="Yosida M."/>
            <person name="Hotuta T."/>
            <person name="Kusano J."/>
            <person name="Kanehori K."/>
            <person name="Takahashi-Fujii A."/>
            <person name="Hara H."/>
            <person name="Tanase T.-O."/>
            <person name="Nomura Y."/>
            <person name="Togiya S."/>
            <person name="Komai F."/>
            <person name="Hara R."/>
            <person name="Takeuchi K."/>
            <person name="Arita M."/>
            <person name="Imose N."/>
            <person name="Musashino K."/>
            <person name="Yuuki H."/>
            <person name="Oshima A."/>
            <person name="Sasaki N."/>
            <person name="Aotsuka S."/>
            <person name="Yoshikawa Y."/>
            <person name="Matsunawa H."/>
            <person name="Ichihara T."/>
            <person name="Shiohata N."/>
            <person name="Sano S."/>
            <person name="Moriya S."/>
            <person name="Momiyama H."/>
            <person name="Satoh N."/>
            <person name="Takami S."/>
            <person name="Terashima Y."/>
            <person name="Suzuki O."/>
            <person name="Nakagawa S."/>
            <person name="Senoh A."/>
            <person name="Mizoguchi H."/>
            <person name="Goto Y."/>
            <person name="Shimizu F."/>
            <person name="Wakebe H."/>
            <person name="Hishigaki H."/>
            <person name="Watanabe T."/>
            <person name="Sugiyama A."/>
            <person name="Takemoto M."/>
            <person name="Kawakami B."/>
            <person name="Yamazaki M."/>
            <person name="Watanabe K."/>
            <person name="Kumagai A."/>
            <person name="Itakura S."/>
            <person name="Fukuzumi Y."/>
            <person name="Fujimori Y."/>
            <person name="Komiyama M."/>
            <person name="Tashiro H."/>
            <person name="Tanigami A."/>
            <person name="Fujiwara T."/>
            <person name="Ono T."/>
            <person name="Yamada K."/>
            <person name="Fujii Y."/>
            <person name="Ozaki K."/>
            <person name="Hirao M."/>
            <person name="Ohmori Y."/>
            <person name="Kawabata A."/>
            <person name="Hikiji T."/>
            <person name="Kobatake N."/>
            <person name="Inagaki H."/>
            <person name="Ikema Y."/>
            <person name="Okamoto S."/>
            <person name="Okitani R."/>
            <person name="Kawakami T."/>
            <person name="Noguchi S."/>
            <person name="Itoh T."/>
            <person name="Shigeta K."/>
            <person name="Senba T."/>
            <person name="Matsumura K."/>
            <person name="Nakajima Y."/>
            <person name="Mizuno T."/>
            <person name="Morinaga M."/>
            <person name="Sasaki M."/>
            <person name="Togashi T."/>
            <person name="Oyama M."/>
            <person name="Hata H."/>
            <person name="Watanabe M."/>
            <person name="Komatsu T."/>
            <person name="Mizushima-Sugano J."/>
            <person name="Satoh T."/>
            <person name="Shirai Y."/>
            <person name="Takahashi Y."/>
            <person name="Nakagawa K."/>
            <person name="Okumura K."/>
            <person name="Nagase T."/>
            <person name="Nomura N."/>
            <person name="Kikuchi H."/>
            <person name="Masuho Y."/>
            <person name="Yamashita R."/>
            <person name="Nakai K."/>
            <person name="Yada T."/>
            <person name="Nakamura Y."/>
            <person name="Ohara O."/>
            <person name="Isogai T."/>
            <person name="Sugano S."/>
        </authorList>
    </citation>
    <scope>NUCLEOTIDE SEQUENCE [LARGE SCALE MRNA] (ISOFORM 1)</scope>
</reference>
<reference key="3">
    <citation type="journal article" date="2004" name="Genome Res.">
        <title>The status, quality, and expansion of the NIH full-length cDNA project: the Mammalian Gene Collection (MGC).</title>
        <authorList>
            <consortium name="The MGC Project Team"/>
        </authorList>
    </citation>
    <scope>NUCLEOTIDE SEQUENCE [LARGE SCALE MRNA] (ISOFORM 1)</scope>
    <source>
        <tissue>Colon</tissue>
    </source>
</reference>
<reference key="4">
    <citation type="journal article" date="2008" name="J. Proteome Res.">
        <title>Phosphoproteome of resting human platelets.</title>
        <authorList>
            <person name="Zahedi R.P."/>
            <person name="Lewandrowski U."/>
            <person name="Wiesner J."/>
            <person name="Wortelkamp S."/>
            <person name="Moebius J."/>
            <person name="Schuetz C."/>
            <person name="Walter U."/>
            <person name="Gambaryan S."/>
            <person name="Sickmann A."/>
        </authorList>
    </citation>
    <scope>PHOSPHORYLATION [LARGE SCALE ANALYSIS] AT THR-417</scope>
    <scope>IDENTIFICATION BY MASS SPECTROMETRY [LARGE SCALE ANALYSIS]</scope>
    <source>
        <tissue>Platelet</tissue>
    </source>
</reference>
<reference key="5">
    <citation type="journal article" date="2008" name="Proc. Natl. Acad. Sci. U.S.A.">
        <title>A quantitative atlas of mitotic phosphorylation.</title>
        <authorList>
            <person name="Dephoure N."/>
            <person name="Zhou C."/>
            <person name="Villen J."/>
            <person name="Beausoleil S.A."/>
            <person name="Bakalarski C.E."/>
            <person name="Elledge S.J."/>
            <person name="Gygi S.P."/>
        </authorList>
    </citation>
    <scope>PHOSPHORYLATION [LARGE SCALE ANALYSIS] AT THR-417</scope>
    <scope>IDENTIFICATION BY MASS SPECTROMETRY [LARGE SCALE ANALYSIS]</scope>
    <source>
        <tissue>Cervix carcinoma</tissue>
    </source>
</reference>
<reference key="6">
    <citation type="journal article" date="2013" name="J. Proteome Res.">
        <title>Toward a comprehensive characterization of a human cancer cell phosphoproteome.</title>
        <authorList>
            <person name="Zhou H."/>
            <person name="Di Palma S."/>
            <person name="Preisinger C."/>
            <person name="Peng M."/>
            <person name="Polat A.N."/>
            <person name="Heck A.J."/>
            <person name="Mohammed S."/>
        </authorList>
    </citation>
    <scope>PHOSPHORYLATION [LARGE SCALE ANALYSIS] AT THR-417 AND SER-421</scope>
    <scope>IDENTIFICATION BY MASS SPECTROMETRY [LARGE SCALE ANALYSIS]</scope>
    <source>
        <tissue>Cervix carcinoma</tissue>
        <tissue>Erythroleukemia</tissue>
    </source>
</reference>
<reference key="7">
    <citation type="journal article" date="2014" name="J. Proteomics">
        <title>An enzyme assisted RP-RPLC approach for in-depth analysis of human liver phosphoproteome.</title>
        <authorList>
            <person name="Bian Y."/>
            <person name="Song C."/>
            <person name="Cheng K."/>
            <person name="Dong M."/>
            <person name="Wang F."/>
            <person name="Huang J."/>
            <person name="Sun D."/>
            <person name="Wang L."/>
            <person name="Ye M."/>
            <person name="Zou H."/>
        </authorList>
    </citation>
    <scope>PHOSPHORYLATION [LARGE SCALE ANALYSIS] AT THR-417</scope>
    <scope>IDENTIFICATION BY MASS SPECTROMETRY [LARGE SCALE ANALYSIS]</scope>
    <source>
        <tissue>Liver</tissue>
    </source>
</reference>
<dbReference type="EMBL" id="DQ223959">
    <property type="protein sequence ID" value="ABB03906.1"/>
    <property type="molecule type" value="mRNA"/>
</dbReference>
<dbReference type="EMBL" id="AK291844">
    <property type="protein sequence ID" value="BAF84533.1"/>
    <property type="molecule type" value="mRNA"/>
</dbReference>
<dbReference type="EMBL" id="BC007557">
    <property type="protein sequence ID" value="AAH07557.2"/>
    <property type="molecule type" value="mRNA"/>
</dbReference>
<dbReference type="CCDS" id="CCDS32640.1">
    <molecule id="Q96IG2-1"/>
</dbReference>
<dbReference type="CCDS" id="CCDS54116.1">
    <molecule id="Q96IG2-2"/>
</dbReference>
<dbReference type="RefSeq" id="NP_001171835.1">
    <molecule id="Q96IG2-2"/>
    <property type="nucleotide sequence ID" value="NM_001184906.2"/>
</dbReference>
<dbReference type="RefSeq" id="NP_116264.2">
    <molecule id="Q96IG2-1"/>
    <property type="nucleotide sequence ID" value="NM_032875.2"/>
</dbReference>
<dbReference type="SMR" id="Q96IG2"/>
<dbReference type="BioGRID" id="124392">
    <property type="interactions" value="18"/>
</dbReference>
<dbReference type="ComplexPortal" id="CPX-2873">
    <property type="entry name" value="SCF E3 ubiquitin ligase complex, FBXL20 variant"/>
</dbReference>
<dbReference type="CORUM" id="Q96IG2"/>
<dbReference type="FunCoup" id="Q96IG2">
    <property type="interactions" value="591"/>
</dbReference>
<dbReference type="IntAct" id="Q96IG2">
    <property type="interactions" value="8"/>
</dbReference>
<dbReference type="STRING" id="9606.ENSP00000264658"/>
<dbReference type="TCDB" id="8.A.92.1.17">
    <property type="family name" value="the g-protein AlphaBetaGama complex (gpc) family"/>
</dbReference>
<dbReference type="GlyGen" id="Q96IG2">
    <property type="glycosylation" value="1 site"/>
</dbReference>
<dbReference type="iPTMnet" id="Q96IG2"/>
<dbReference type="PhosphoSitePlus" id="Q96IG2"/>
<dbReference type="SwissPalm" id="Q96IG2"/>
<dbReference type="BioMuta" id="FBXL20"/>
<dbReference type="DMDM" id="38503141"/>
<dbReference type="jPOST" id="Q96IG2"/>
<dbReference type="MassIVE" id="Q96IG2"/>
<dbReference type="PaxDb" id="9606-ENSP00000264658"/>
<dbReference type="PeptideAtlas" id="Q96IG2"/>
<dbReference type="ProteomicsDB" id="76826">
    <molecule id="Q96IG2-1"/>
</dbReference>
<dbReference type="ProteomicsDB" id="76827">
    <molecule id="Q96IG2-2"/>
</dbReference>
<dbReference type="Pumba" id="Q96IG2"/>
<dbReference type="Antibodypedia" id="28248">
    <property type="antibodies" value="151 antibodies from 25 providers"/>
</dbReference>
<dbReference type="DNASU" id="84961"/>
<dbReference type="Ensembl" id="ENST00000264658.11">
    <molecule id="Q96IG2-1"/>
    <property type="protein sequence ID" value="ENSP00000264658.6"/>
    <property type="gene ID" value="ENSG00000108306.13"/>
</dbReference>
<dbReference type="Ensembl" id="ENST00000394294.7">
    <molecule id="Q96IG2-2"/>
    <property type="protein sequence ID" value="ENSP00000377832.3"/>
    <property type="gene ID" value="ENSG00000108306.13"/>
</dbReference>
<dbReference type="Ensembl" id="ENST00000583610.5">
    <molecule id="Q96IG2-1"/>
    <property type="protein sequence ID" value="ENSP00000462271.1"/>
    <property type="gene ID" value="ENSG00000108306.13"/>
</dbReference>
<dbReference type="GeneID" id="84961"/>
<dbReference type="KEGG" id="hsa:84961"/>
<dbReference type="MANE-Select" id="ENST00000264658.11">
    <property type="protein sequence ID" value="ENSP00000264658.6"/>
    <property type="RefSeq nucleotide sequence ID" value="NM_032875.3"/>
    <property type="RefSeq protein sequence ID" value="NP_116264.2"/>
</dbReference>
<dbReference type="UCSC" id="uc002hrt.4">
    <molecule id="Q96IG2-1"/>
    <property type="organism name" value="human"/>
</dbReference>
<dbReference type="AGR" id="HGNC:24679"/>
<dbReference type="CTD" id="84961"/>
<dbReference type="DisGeNET" id="84961"/>
<dbReference type="GeneCards" id="FBXL20"/>
<dbReference type="HGNC" id="HGNC:24679">
    <property type="gene designation" value="FBXL20"/>
</dbReference>
<dbReference type="HPA" id="ENSG00000108306">
    <property type="expression patterns" value="Low tissue specificity"/>
</dbReference>
<dbReference type="MIM" id="609086">
    <property type="type" value="gene"/>
</dbReference>
<dbReference type="neXtProt" id="NX_Q96IG2"/>
<dbReference type="OpenTargets" id="ENSG00000108306"/>
<dbReference type="PharmGKB" id="PA134976410"/>
<dbReference type="VEuPathDB" id="HostDB:ENSG00000108306"/>
<dbReference type="eggNOG" id="KOG4341">
    <property type="taxonomic scope" value="Eukaryota"/>
</dbReference>
<dbReference type="GeneTree" id="ENSGT00940000153845"/>
<dbReference type="HOGENOM" id="CLU_016072_7_1_1"/>
<dbReference type="InParanoid" id="Q96IG2"/>
<dbReference type="OMA" id="LCNRIRY"/>
<dbReference type="OrthoDB" id="550575at2759"/>
<dbReference type="PAN-GO" id="Q96IG2">
    <property type="GO annotations" value="2 GO annotations based on evolutionary models"/>
</dbReference>
<dbReference type="PhylomeDB" id="Q96IG2"/>
<dbReference type="TreeFam" id="TF313434"/>
<dbReference type="PathwayCommons" id="Q96IG2"/>
<dbReference type="Reactome" id="R-HSA-8951664">
    <property type="pathway name" value="Neddylation"/>
</dbReference>
<dbReference type="Reactome" id="R-HSA-983168">
    <property type="pathway name" value="Antigen processing: Ubiquitination &amp; Proteasome degradation"/>
</dbReference>
<dbReference type="SignaLink" id="Q96IG2"/>
<dbReference type="BioGRID-ORCS" id="84961">
    <property type="hits" value="15 hits in 1195 CRISPR screens"/>
</dbReference>
<dbReference type="ChiTaRS" id="FBXL20">
    <property type="organism name" value="human"/>
</dbReference>
<dbReference type="GenomeRNAi" id="84961"/>
<dbReference type="Pharos" id="Q96IG2">
    <property type="development level" value="Tbio"/>
</dbReference>
<dbReference type="PRO" id="PR:Q96IG2"/>
<dbReference type="Proteomes" id="UP000005640">
    <property type="component" value="Chromosome 17"/>
</dbReference>
<dbReference type="RNAct" id="Q96IG2">
    <property type="molecule type" value="protein"/>
</dbReference>
<dbReference type="Bgee" id="ENSG00000108306">
    <property type="expression patterns" value="Expressed in secondary oocyte and 191 other cell types or tissues"/>
</dbReference>
<dbReference type="ExpressionAtlas" id="Q96IG2">
    <property type="expression patterns" value="baseline and differential"/>
</dbReference>
<dbReference type="GO" id="GO:0005829">
    <property type="term" value="C:cytosol"/>
    <property type="evidence" value="ECO:0000304"/>
    <property type="project" value="Reactome"/>
</dbReference>
<dbReference type="GO" id="GO:0098978">
    <property type="term" value="C:glutamatergic synapse"/>
    <property type="evidence" value="ECO:0007669"/>
    <property type="project" value="Ensembl"/>
</dbReference>
<dbReference type="GO" id="GO:0098793">
    <property type="term" value="C:presynapse"/>
    <property type="evidence" value="ECO:0007669"/>
    <property type="project" value="GOC"/>
</dbReference>
<dbReference type="GO" id="GO:0019005">
    <property type="term" value="C:SCF ubiquitin ligase complex"/>
    <property type="evidence" value="ECO:0000318"/>
    <property type="project" value="GO_Central"/>
</dbReference>
<dbReference type="GO" id="GO:0098685">
    <property type="term" value="C:Schaffer collateral - CA1 synapse"/>
    <property type="evidence" value="ECO:0007669"/>
    <property type="project" value="Ensembl"/>
</dbReference>
<dbReference type="GO" id="GO:0001662">
    <property type="term" value="P:behavioral fear response"/>
    <property type="evidence" value="ECO:0007669"/>
    <property type="project" value="Ensembl"/>
</dbReference>
<dbReference type="GO" id="GO:0099575">
    <property type="term" value="P:regulation of protein catabolic process at presynapse, modulating synaptic transmission"/>
    <property type="evidence" value="ECO:0007669"/>
    <property type="project" value="Ensembl"/>
</dbReference>
<dbReference type="GO" id="GO:2000300">
    <property type="term" value="P:regulation of synaptic vesicle exocytosis"/>
    <property type="evidence" value="ECO:0007669"/>
    <property type="project" value="Ensembl"/>
</dbReference>
<dbReference type="GO" id="GO:0031146">
    <property type="term" value="P:SCF-dependent proteasomal ubiquitin-dependent protein catabolic process"/>
    <property type="evidence" value="ECO:0000318"/>
    <property type="project" value="GO_Central"/>
</dbReference>
<dbReference type="CDD" id="cd22115">
    <property type="entry name" value="F-box_FBXL2-like"/>
    <property type="match status" value="1"/>
</dbReference>
<dbReference type="FunFam" id="3.80.10.10:FF:000339">
    <property type="entry name" value="F-box/LRR-repeat protein 2 isoform X1"/>
    <property type="match status" value="1"/>
</dbReference>
<dbReference type="FunFam" id="3.80.10.10:FF:000578">
    <property type="entry name" value="F-box/LRR-repeat protein 2 isoform X1"/>
    <property type="match status" value="1"/>
</dbReference>
<dbReference type="FunFam" id="3.80.10.10:FF:000042">
    <property type="entry name" value="F-box/LRR-repeat protein 20 isoform 2"/>
    <property type="match status" value="1"/>
</dbReference>
<dbReference type="FunFam" id="1.20.1280.50:FF:000013">
    <property type="entry name" value="F-box/LRR-repeat protein 20 isoform X1"/>
    <property type="match status" value="1"/>
</dbReference>
<dbReference type="Gene3D" id="3.80.10.10">
    <property type="entry name" value="Ribonuclease Inhibitor"/>
    <property type="match status" value="2"/>
</dbReference>
<dbReference type="InterPro" id="IPR001810">
    <property type="entry name" value="F-box_dom"/>
</dbReference>
<dbReference type="InterPro" id="IPR001611">
    <property type="entry name" value="Leu-rich_rpt"/>
</dbReference>
<dbReference type="InterPro" id="IPR006553">
    <property type="entry name" value="Leu-rich_rpt_Cys-con_subtyp"/>
</dbReference>
<dbReference type="InterPro" id="IPR032675">
    <property type="entry name" value="LRR_dom_sf"/>
</dbReference>
<dbReference type="PANTHER" id="PTHR13318:SF95">
    <property type="entry name" value="F-BOX PROTEIN YLR352W"/>
    <property type="match status" value="1"/>
</dbReference>
<dbReference type="PANTHER" id="PTHR13318">
    <property type="entry name" value="PARTNER OF PAIRED, ISOFORM B-RELATED"/>
    <property type="match status" value="1"/>
</dbReference>
<dbReference type="Pfam" id="PF12937">
    <property type="entry name" value="F-box-like"/>
    <property type="match status" value="1"/>
</dbReference>
<dbReference type="Pfam" id="PF13516">
    <property type="entry name" value="LRR_6"/>
    <property type="match status" value="4"/>
</dbReference>
<dbReference type="SMART" id="SM00256">
    <property type="entry name" value="FBOX"/>
    <property type="match status" value="1"/>
</dbReference>
<dbReference type="SMART" id="SM00367">
    <property type="entry name" value="LRR_CC"/>
    <property type="match status" value="12"/>
</dbReference>
<dbReference type="SUPFAM" id="SSF52047">
    <property type="entry name" value="RNI-like"/>
    <property type="match status" value="1"/>
</dbReference>
<dbReference type="PROSITE" id="PS50181">
    <property type="entry name" value="FBOX"/>
    <property type="match status" value="1"/>
</dbReference>
<keyword id="KW-0025">Alternative splicing</keyword>
<keyword id="KW-0963">Cytoplasm</keyword>
<keyword id="KW-0433">Leucine-rich repeat</keyword>
<keyword id="KW-0597">Phosphoprotein</keyword>
<keyword id="KW-1267">Proteomics identification</keyword>
<keyword id="KW-1185">Reference proteome</keyword>
<keyword id="KW-0677">Repeat</keyword>
<keyword id="KW-0833">Ubl conjugation pathway</keyword>
<gene>
    <name type="primary">FBXL20</name>
    <name type="synonym">FBL2</name>
</gene>
<proteinExistence type="evidence at protein level"/>
<protein>
    <recommendedName>
        <fullName>F-box/LRR-repeat protein 20</fullName>
    </recommendedName>
    <alternativeName>
        <fullName>F-box and leucine-rich repeat protein 20</fullName>
    </alternativeName>
    <alternativeName>
        <fullName>F-box/LRR-repeat protein 2-like</fullName>
    </alternativeName>
</protein>
<feature type="chain" id="PRO_0000119870" description="F-box/LRR-repeat protein 20">
    <location>
        <begin position="1"/>
        <end position="436"/>
    </location>
</feature>
<feature type="domain" description="F-box" evidence="2">
    <location>
        <begin position="22"/>
        <end position="68"/>
    </location>
</feature>
<feature type="repeat" description="LRR 1">
    <location>
        <begin position="74"/>
        <end position="100"/>
    </location>
</feature>
<feature type="repeat" description="LRR 2">
    <location>
        <begin position="101"/>
        <end position="126"/>
    </location>
</feature>
<feature type="repeat" description="LRR 3">
    <location>
        <begin position="127"/>
        <end position="152"/>
    </location>
</feature>
<feature type="repeat" description="LRR 4">
    <location>
        <begin position="153"/>
        <end position="178"/>
    </location>
</feature>
<feature type="repeat" description="LRR 5">
    <location>
        <begin position="179"/>
        <end position="204"/>
    </location>
</feature>
<feature type="repeat" description="LRR 6">
    <location>
        <begin position="205"/>
        <end position="230"/>
    </location>
</feature>
<feature type="repeat" description="LRR 7">
    <location>
        <begin position="231"/>
        <end position="256"/>
    </location>
</feature>
<feature type="repeat" description="LRR 8">
    <location>
        <begin position="257"/>
        <end position="282"/>
    </location>
</feature>
<feature type="repeat" description="LRR 9">
    <location>
        <begin position="283"/>
        <end position="308"/>
    </location>
</feature>
<feature type="repeat" description="LRR 10">
    <location>
        <begin position="309"/>
        <end position="334"/>
    </location>
</feature>
<feature type="repeat" description="LRR 11">
    <location>
        <begin position="335"/>
        <end position="363"/>
    </location>
</feature>
<feature type="repeat" description="LRR 12">
    <location>
        <begin position="364"/>
        <end position="388"/>
    </location>
</feature>
<feature type="repeat" description="LRR 13">
    <location>
        <begin position="389"/>
        <end position="414"/>
    </location>
</feature>
<feature type="modified residue" description="Phosphothreonine" evidence="5 6 7 8">
    <location>
        <position position="417"/>
    </location>
</feature>
<feature type="modified residue" description="Phosphoserine" evidence="7">
    <location>
        <position position="421"/>
    </location>
</feature>
<feature type="splice variant" id="VSP_030769" description="In isoform 2." evidence="3">
    <location>
        <begin position="134"/>
        <end position="165"/>
    </location>
</feature>
<feature type="sequence conflict" description="In Ref. 1; BAF84533." evidence="4" ref="1">
    <original>S</original>
    <variation>P</variation>
    <location>
        <position position="17"/>
    </location>
</feature>
<feature type="sequence conflict" description="In Ref. 1; BAF84533." evidence="4" ref="1">
    <original>L</original>
    <variation>F</variation>
    <location>
        <position position="375"/>
    </location>
</feature>
<evidence type="ECO:0000250" key="1"/>
<evidence type="ECO:0000255" key="2">
    <source>
        <dbReference type="PROSITE-ProRule" id="PRU00080"/>
    </source>
</evidence>
<evidence type="ECO:0000303" key="3">
    <source ref="1"/>
</evidence>
<evidence type="ECO:0000305" key="4"/>
<evidence type="ECO:0007744" key="5">
    <source>
    </source>
</evidence>
<evidence type="ECO:0007744" key="6">
    <source>
    </source>
</evidence>
<evidence type="ECO:0007744" key="7">
    <source>
    </source>
</evidence>
<evidence type="ECO:0007744" key="8">
    <source>
    </source>
</evidence>
<sequence length="436" mass="48423">MRRDVNGVTKSRFEMFSNSDEAVINKKLPKELLLRIFSFLDVVTLCRCAQVSRAWNVLALDGSNWQRIDLFDFQRDIEGRVVENISKRCGGFLRKLSLRGCLGVGDNALRTFAQNCRNIEVLNLNGCTKTTDATCTSLSKFCSKLRHLDLASCTSITNMSLKALSEGCPLLEQLNISWCDQVTKDGIQALVRGCGGLKALFLKGCTQLEDEALKYIGAHCPELVTLNLQTCLQITDEGLITICRGCHKLQSLCASGCSNITDAILNALGQNCPRLRILEVARCSQLTDVGFTTLARNCHELEKMDLEECVQITDSTLIQLSIHCPRLQVLSLSHCELITDDGIRHLGNGACAHDQLEVIELDNCPLITDASLEHLKSCHSLERIELYDCQQITRAGIKRLRTHLPNIKVHAYFAPVTPPPSVGGSRQRFCRCCIIL</sequence>
<organism>
    <name type="scientific">Homo sapiens</name>
    <name type="common">Human</name>
    <dbReference type="NCBI Taxonomy" id="9606"/>
    <lineage>
        <taxon>Eukaryota</taxon>
        <taxon>Metazoa</taxon>
        <taxon>Chordata</taxon>
        <taxon>Craniata</taxon>
        <taxon>Vertebrata</taxon>
        <taxon>Euteleostomi</taxon>
        <taxon>Mammalia</taxon>
        <taxon>Eutheria</taxon>
        <taxon>Euarchontoglires</taxon>
        <taxon>Primates</taxon>
        <taxon>Haplorrhini</taxon>
        <taxon>Catarrhini</taxon>
        <taxon>Hominidae</taxon>
        <taxon>Homo</taxon>
    </lineage>
</organism>
<accession>Q96IG2</accession>
<accession>A8K729</accession>
<accession>Q38J52</accession>
<comment type="function">
    <text evidence="1">Substrate-recognition component of the SCF (SKP1-CUL1-F-box protein)-type E3 ubiquitin ligase complex. Role in neural transmission (By similarity).</text>
</comment>
<comment type="subunit">
    <text evidence="1">Interacts with SKP1 and CUL1.</text>
</comment>
<comment type="interaction">
    <interactant intactId="EBI-8835647">
        <id>Q96IG2</id>
    </interactant>
    <interactant intactId="EBI-1048931">
        <id>P63151</id>
        <label>PPP2R2A</label>
    </interactant>
    <organismsDiffer>false</organismsDiffer>
    <experiments>4</experiments>
</comment>
<comment type="interaction">
    <interactant intactId="EBI-8835647">
        <id>Q96IG2</id>
    </interactant>
    <interactant intactId="EBI-307486">
        <id>P63208</id>
        <label>SKP1</label>
    </interactant>
    <organismsDiffer>false</organismsDiffer>
    <experiments>7</experiments>
</comment>
<comment type="subcellular location">
    <subcellularLocation>
        <location evidence="1">Cytoplasm</location>
    </subcellularLocation>
</comment>
<comment type="alternative products">
    <event type="alternative splicing"/>
    <isoform>
        <id>Q96IG2-1</id>
        <name>1</name>
        <sequence type="displayed"/>
    </isoform>
    <isoform>
        <id>Q96IG2-2</id>
        <name>2</name>
        <sequence type="described" ref="VSP_030769"/>
    </isoform>
</comment>